<comment type="catalytic activity">
    <reaction evidence="1">
        <text>tRNA(Cys) + L-cysteine + ATP = L-cysteinyl-tRNA(Cys) + AMP + diphosphate</text>
        <dbReference type="Rhea" id="RHEA:17773"/>
        <dbReference type="Rhea" id="RHEA-COMP:9661"/>
        <dbReference type="Rhea" id="RHEA-COMP:9679"/>
        <dbReference type="ChEBI" id="CHEBI:30616"/>
        <dbReference type="ChEBI" id="CHEBI:33019"/>
        <dbReference type="ChEBI" id="CHEBI:35235"/>
        <dbReference type="ChEBI" id="CHEBI:78442"/>
        <dbReference type="ChEBI" id="CHEBI:78517"/>
        <dbReference type="ChEBI" id="CHEBI:456215"/>
        <dbReference type="EC" id="6.1.1.16"/>
    </reaction>
</comment>
<comment type="cofactor">
    <cofactor evidence="1">
        <name>Zn(2+)</name>
        <dbReference type="ChEBI" id="CHEBI:29105"/>
    </cofactor>
    <text evidence="1">Binds 1 zinc ion per subunit.</text>
</comment>
<comment type="subunit">
    <text evidence="1">Monomer.</text>
</comment>
<comment type="subcellular location">
    <subcellularLocation>
        <location evidence="1">Cytoplasm</location>
    </subcellularLocation>
</comment>
<comment type="similarity">
    <text evidence="1">Belongs to the class-I aminoacyl-tRNA synthetase family.</text>
</comment>
<reference key="1">
    <citation type="journal article" date="2000" name="DNA Res.">
        <title>Complete genome structure of the nitrogen-fixing symbiotic bacterium Mesorhizobium loti.</title>
        <authorList>
            <person name="Kaneko T."/>
            <person name="Nakamura Y."/>
            <person name="Sato S."/>
            <person name="Asamizu E."/>
            <person name="Kato T."/>
            <person name="Sasamoto S."/>
            <person name="Watanabe A."/>
            <person name="Idesawa K."/>
            <person name="Ishikawa A."/>
            <person name="Kawashima K."/>
            <person name="Kimura T."/>
            <person name="Kishida Y."/>
            <person name="Kiyokawa C."/>
            <person name="Kohara M."/>
            <person name="Matsumoto M."/>
            <person name="Matsuno A."/>
            <person name="Mochizuki Y."/>
            <person name="Nakayama S."/>
            <person name="Nakazaki N."/>
            <person name="Shimpo S."/>
            <person name="Sugimoto M."/>
            <person name="Takeuchi C."/>
            <person name="Yamada M."/>
            <person name="Tabata S."/>
        </authorList>
    </citation>
    <scope>NUCLEOTIDE SEQUENCE [LARGE SCALE GENOMIC DNA]</scope>
    <source>
        <strain>LMG 29417 / CECT 9101 / MAFF 303099</strain>
    </source>
</reference>
<organism>
    <name type="scientific">Mesorhizobium japonicum (strain LMG 29417 / CECT 9101 / MAFF 303099)</name>
    <name type="common">Mesorhizobium loti (strain MAFF 303099)</name>
    <dbReference type="NCBI Taxonomy" id="266835"/>
    <lineage>
        <taxon>Bacteria</taxon>
        <taxon>Pseudomonadati</taxon>
        <taxon>Pseudomonadota</taxon>
        <taxon>Alphaproteobacteria</taxon>
        <taxon>Hyphomicrobiales</taxon>
        <taxon>Phyllobacteriaceae</taxon>
        <taxon>Mesorhizobium</taxon>
    </lineage>
</organism>
<dbReference type="EC" id="6.1.1.16" evidence="1"/>
<dbReference type="EMBL" id="BA000012">
    <property type="protein sequence ID" value="BAB54185.1"/>
    <property type="molecule type" value="Genomic_DNA"/>
</dbReference>
<dbReference type="RefSeq" id="WP_010915129.1">
    <property type="nucleotide sequence ID" value="NC_002678.2"/>
</dbReference>
<dbReference type="SMR" id="Q984X8"/>
<dbReference type="KEGG" id="mlo:mlr7799"/>
<dbReference type="PATRIC" id="fig|266835.9.peg.6242"/>
<dbReference type="eggNOG" id="COG0215">
    <property type="taxonomic scope" value="Bacteria"/>
</dbReference>
<dbReference type="HOGENOM" id="CLU_013528_0_1_5"/>
<dbReference type="Proteomes" id="UP000000552">
    <property type="component" value="Chromosome"/>
</dbReference>
<dbReference type="GO" id="GO:0005829">
    <property type="term" value="C:cytosol"/>
    <property type="evidence" value="ECO:0007669"/>
    <property type="project" value="TreeGrafter"/>
</dbReference>
<dbReference type="GO" id="GO:0005524">
    <property type="term" value="F:ATP binding"/>
    <property type="evidence" value="ECO:0007669"/>
    <property type="project" value="UniProtKB-UniRule"/>
</dbReference>
<dbReference type="GO" id="GO:0004817">
    <property type="term" value="F:cysteine-tRNA ligase activity"/>
    <property type="evidence" value="ECO:0007669"/>
    <property type="project" value="UniProtKB-UniRule"/>
</dbReference>
<dbReference type="GO" id="GO:0008270">
    <property type="term" value="F:zinc ion binding"/>
    <property type="evidence" value="ECO:0007669"/>
    <property type="project" value="UniProtKB-UniRule"/>
</dbReference>
<dbReference type="GO" id="GO:0006423">
    <property type="term" value="P:cysteinyl-tRNA aminoacylation"/>
    <property type="evidence" value="ECO:0007669"/>
    <property type="project" value="UniProtKB-UniRule"/>
</dbReference>
<dbReference type="CDD" id="cd00672">
    <property type="entry name" value="CysRS_core"/>
    <property type="match status" value="1"/>
</dbReference>
<dbReference type="Gene3D" id="3.40.50.620">
    <property type="entry name" value="HUPs"/>
    <property type="match status" value="1"/>
</dbReference>
<dbReference type="HAMAP" id="MF_00041">
    <property type="entry name" value="Cys_tRNA_synth"/>
    <property type="match status" value="1"/>
</dbReference>
<dbReference type="InterPro" id="IPR015803">
    <property type="entry name" value="Cys-tRNA-ligase"/>
</dbReference>
<dbReference type="InterPro" id="IPR024909">
    <property type="entry name" value="Cys-tRNA/MSH_ligase"/>
</dbReference>
<dbReference type="InterPro" id="IPR014729">
    <property type="entry name" value="Rossmann-like_a/b/a_fold"/>
</dbReference>
<dbReference type="InterPro" id="IPR032678">
    <property type="entry name" value="tRNA-synt_1_cat_dom"/>
</dbReference>
<dbReference type="InterPro" id="IPR009080">
    <property type="entry name" value="tRNAsynth_Ia_anticodon-bd"/>
</dbReference>
<dbReference type="NCBIfam" id="TIGR00435">
    <property type="entry name" value="cysS"/>
    <property type="match status" value="1"/>
</dbReference>
<dbReference type="PANTHER" id="PTHR10890:SF3">
    <property type="entry name" value="CYSTEINE--TRNA LIGASE, CYTOPLASMIC"/>
    <property type="match status" value="1"/>
</dbReference>
<dbReference type="PANTHER" id="PTHR10890">
    <property type="entry name" value="CYSTEINYL-TRNA SYNTHETASE"/>
    <property type="match status" value="1"/>
</dbReference>
<dbReference type="Pfam" id="PF01406">
    <property type="entry name" value="tRNA-synt_1e"/>
    <property type="match status" value="1"/>
</dbReference>
<dbReference type="PRINTS" id="PR00983">
    <property type="entry name" value="TRNASYNTHCYS"/>
</dbReference>
<dbReference type="SUPFAM" id="SSF47323">
    <property type="entry name" value="Anticodon-binding domain of a subclass of class I aminoacyl-tRNA synthetases"/>
    <property type="match status" value="1"/>
</dbReference>
<dbReference type="SUPFAM" id="SSF52374">
    <property type="entry name" value="Nucleotidylyl transferase"/>
    <property type="match status" value="1"/>
</dbReference>
<protein>
    <recommendedName>
        <fullName evidence="1">Cysteine--tRNA ligase</fullName>
        <ecNumber evidence="1">6.1.1.16</ecNumber>
    </recommendedName>
    <alternativeName>
        <fullName evidence="1">Cysteinyl-tRNA synthetase</fullName>
        <shortName evidence="1">CysRS</shortName>
    </alternativeName>
</protein>
<keyword id="KW-0030">Aminoacyl-tRNA synthetase</keyword>
<keyword id="KW-0067">ATP-binding</keyword>
<keyword id="KW-0963">Cytoplasm</keyword>
<keyword id="KW-0436">Ligase</keyword>
<keyword id="KW-0479">Metal-binding</keyword>
<keyword id="KW-0547">Nucleotide-binding</keyword>
<keyword id="KW-0648">Protein biosynthesis</keyword>
<keyword id="KW-0862">Zinc</keyword>
<name>SYC_RHILO</name>
<proteinExistence type="inferred from homology"/>
<gene>
    <name evidence="1" type="primary">cysS</name>
    <name type="ordered locus">mlr7799</name>
</gene>
<feature type="chain" id="PRO_0000159464" description="Cysteine--tRNA ligase">
    <location>
        <begin position="1"/>
        <end position="477"/>
    </location>
</feature>
<feature type="short sequence motif" description="'HIGH' region">
    <location>
        <begin position="36"/>
        <end position="46"/>
    </location>
</feature>
<feature type="short sequence motif" description="'KMSKS' region">
    <location>
        <begin position="293"/>
        <end position="297"/>
    </location>
</feature>
<feature type="binding site" evidence="1">
    <location>
        <position position="34"/>
    </location>
    <ligand>
        <name>Zn(2+)</name>
        <dbReference type="ChEBI" id="CHEBI:29105"/>
    </ligand>
</feature>
<feature type="binding site" evidence="1">
    <location>
        <position position="235"/>
    </location>
    <ligand>
        <name>Zn(2+)</name>
        <dbReference type="ChEBI" id="CHEBI:29105"/>
    </ligand>
</feature>
<feature type="binding site" evidence="1">
    <location>
        <position position="260"/>
    </location>
    <ligand>
        <name>Zn(2+)</name>
        <dbReference type="ChEBI" id="CHEBI:29105"/>
    </ligand>
</feature>
<feature type="binding site" evidence="1">
    <location>
        <position position="264"/>
    </location>
    <ligand>
        <name>Zn(2+)</name>
        <dbReference type="ChEBI" id="CHEBI:29105"/>
    </ligand>
</feature>
<feature type="binding site" evidence="1">
    <location>
        <position position="296"/>
    </location>
    <ligand>
        <name>ATP</name>
        <dbReference type="ChEBI" id="CHEBI:30616"/>
    </ligand>
</feature>
<accession>Q984X8</accession>
<evidence type="ECO:0000255" key="1">
    <source>
        <dbReference type="HAMAP-Rule" id="MF_00041"/>
    </source>
</evidence>
<sequence length="477" mass="52642">MSDASQGLRLYNTLTRAKTDFVPIDALNVRMYVCGPTVYDFAHIGNARPVIVFDVLFRLLRHLYGQAHVTYVRNITDVDDKINARALRDFGSEISAGKLSLNEAIRRVTEKTADQFHRDVATLGCLEPTVEPRATEFVEPRADGKADMITLIQSLIKRGHAYAAAGEVLFDTASMPDYGQLSKRNLDEQQAGARVAVDAHKKNPGDFVLWKLSSPEEPGWQSPWGRGRPGWHIECSAMSAAYLGEVFDIHGGGLDLIFPHHENEIAQSRCAHGTSVMANVWMHNGFLQVEGQKMSKSLGNFYSIHELLETETFGGRSWPGEVLRLAMLMTHYREPIDFSVRKLEEAENTLRKWKRAADLAPAAGQLPVEVIDALSDDLATYAAFQVLTQLAGEAADGNEAAAALKASLLFLGFDVASADIDEDGVAKAIANRLALIAAKNWTEADRIRDELLAQGVQLKDGKDPVTGERITTWEVKR</sequence>